<accession>Q9Y8I1</accession>
<reference key="1">
    <citation type="journal article" date="1999" name="Biochem. Biophys. Res. Commun.">
        <title>Analysis of DNA compaction profile and intracellular contents of archaeal histones from Pyrococcus kodakaraensis KOD1.</title>
        <authorList>
            <person name="Higashibata H."/>
            <person name="Fujiwara S."/>
            <person name="Takagi M."/>
            <person name="Imanaka T."/>
        </authorList>
    </citation>
    <scope>NUCLEOTIDE SEQUENCE [GENOMIC DNA]</scope>
    <scope>FUNCTION</scope>
    <scope>INDUCTION</scope>
    <scope>DNA-BINDING</scope>
    <source>
        <strain>ATCC BAA-918 / JCM 12380 / KOD1</strain>
    </source>
</reference>
<reference key="2">
    <citation type="journal article" date="2005" name="Genome Res.">
        <title>Complete genome sequence of the hyperthermophilic archaeon Thermococcus kodakaraensis KOD1 and comparison with Pyrococcus genomes.</title>
        <authorList>
            <person name="Fukui T."/>
            <person name="Atomi H."/>
            <person name="Kanai T."/>
            <person name="Matsumi R."/>
            <person name="Fujiwara S."/>
            <person name="Imanaka T."/>
        </authorList>
    </citation>
    <scope>NUCLEOTIDE SEQUENCE [LARGE SCALE GENOMIC DNA]</scope>
    <source>
        <strain>ATCC BAA-918 / JCM 12380 / KOD1</strain>
    </source>
</reference>
<reference key="3">
    <citation type="journal article" date="2011" name="Mol. Biol. Cell">
        <title>Histone and TK0471/TrmBL2 form a novel heterogeneous genome architecture in the hyperthermophilic archaeon Thermococcus kodakarensis.</title>
        <authorList>
            <person name="Maruyama H."/>
            <person name="Shin M."/>
            <person name="Oda T."/>
            <person name="Matsumi R."/>
            <person name="Ohniwa R.L."/>
            <person name="Itoh T."/>
            <person name="Shirahige K."/>
            <person name="Imanaka T."/>
            <person name="Atomi H."/>
            <person name="Yoshimura S.H."/>
            <person name="Takeyasu K."/>
        </authorList>
    </citation>
    <scope>FUNCTION</scope>
    <scope>IDENTIFICATION BY MASS SPECTROMETRY</scope>
    <scope>SUBCELLULAR LOCATION</scope>
    <scope>PROTEIN ABUNDANCE</scope>
    <scope>DNA-BINDING</scope>
    <source>
        <strain>ATCC BAA-918 / JCM 12380 / KOD1</strain>
    </source>
</reference>
<reference key="4">
    <citation type="journal article" date="2012" name="J. Bacteriol.">
        <title>An archaeal histone is required for transformation of Thermococcus kodakarensis.</title>
        <authorList>
            <person name="Cubonovaa L."/>
            <person name="Katano M."/>
            <person name="Kanai T."/>
            <person name="Atomi H."/>
            <person name="Reeve J.N."/>
            <person name="Santangelo T.J."/>
        </authorList>
    </citation>
    <scope>FUNCTION</scope>
    <scope>DISRUPTION PHENOTYPE</scope>
    <source>
        <strain>ATCC BAA-918 / JCM 12380 / KOD1</strain>
    </source>
</reference>
<reference key="5">
    <citation type="journal article" date="2017" name="Science">
        <title>Structure of histone-based chromatin in Archaea.</title>
        <authorList>
            <person name="Mattiroli F."/>
            <person name="Bhattacharyya S."/>
            <person name="Dyer P.N."/>
            <person name="White A.E."/>
            <person name="Sandman K."/>
            <person name="Burkhart B.W."/>
            <person name="Byrne K.R."/>
            <person name="Lee T."/>
            <person name="Ahn N.G."/>
            <person name="Santangelo T.J."/>
            <person name="Reeve J.N."/>
            <person name="Luger K."/>
        </authorList>
    </citation>
    <scope>FUNCTION</scope>
    <scope>SUBUNIT</scope>
    <scope>MUTAGENESIS OF GLY-17</scope>
</reference>
<reference key="6">
    <citation type="journal article" date="2019" name="Mol. Microbiol.">
        <title>TFS and Spt4/5 accelerate transcription through archaeal histone-based chromatin.</title>
        <authorList>
            <person name="Sanders T.J."/>
            <person name="Lammers M."/>
            <person name="Marshall C.J."/>
            <person name="Walker J.E."/>
            <person name="Lynch E.R."/>
            <person name="Santangelo T.J."/>
        </authorList>
    </citation>
    <scope>PROTEIN ABUNDANCE</scope>
</reference>
<feature type="chain" id="PRO_0000154997" description="Archaeal histone HTkA">
    <location>
        <begin position="1"/>
        <end position="67"/>
    </location>
</feature>
<feature type="region of interest" description="Interaction with DNA" evidence="1">
    <location>
        <begin position="20"/>
        <end position="22"/>
    </location>
</feature>
<feature type="region of interest" description="Interaction with DNA" evidence="1">
    <location>
        <begin position="54"/>
        <end position="57"/>
    </location>
</feature>
<feature type="mutagenesis site" description="Expected to impair oligomerization. Alters compaction of DNA on nucleosome-like structures. Delays adaptation to a sulfur-free medium due to impaired transcriptional activation of genes required for growth on a sulfur-free medium." evidence="5">
    <original>G</original>
    <variation>D</variation>
    <variation>L</variation>
    <variation>S</variation>
    <location>
        <position position="17"/>
    </location>
</feature>
<organism>
    <name type="scientific">Thermococcus kodakarensis (strain ATCC BAA-918 / JCM 12380 / KOD1)</name>
    <name type="common">Pyrococcus kodakaraensis (strain KOD1)</name>
    <dbReference type="NCBI Taxonomy" id="69014"/>
    <lineage>
        <taxon>Archaea</taxon>
        <taxon>Methanobacteriati</taxon>
        <taxon>Methanobacteriota</taxon>
        <taxon>Thermococci</taxon>
        <taxon>Thermococcales</taxon>
        <taxon>Thermococcaceae</taxon>
        <taxon>Thermococcus</taxon>
    </lineage>
</organism>
<gene>
    <name evidence="9" type="primary">htkA</name>
    <name evidence="7" type="synonym">hpkA</name>
    <name type="ordered locus">TK1413</name>
</gene>
<dbReference type="EMBL" id="AB016003">
    <property type="protein sequence ID" value="BAA77575.1"/>
    <property type="molecule type" value="Genomic_DNA"/>
</dbReference>
<dbReference type="EMBL" id="AP006878">
    <property type="protein sequence ID" value="BAD85602.1"/>
    <property type="molecule type" value="Genomic_DNA"/>
</dbReference>
<dbReference type="RefSeq" id="WP_011250364.1">
    <property type="nucleotide sequence ID" value="NC_006624.1"/>
</dbReference>
<dbReference type="SMR" id="Q9Y8I1"/>
<dbReference type="FunCoup" id="Q9Y8I1">
    <property type="interactions" value="1"/>
</dbReference>
<dbReference type="STRING" id="69014.TK1413"/>
<dbReference type="EnsemblBacteria" id="BAD85602">
    <property type="protein sequence ID" value="BAD85602"/>
    <property type="gene ID" value="TK1413"/>
</dbReference>
<dbReference type="GeneID" id="78447933"/>
<dbReference type="KEGG" id="tko:TK1413"/>
<dbReference type="PATRIC" id="fig|69014.16.peg.1375"/>
<dbReference type="eggNOG" id="arCOG02144">
    <property type="taxonomic scope" value="Archaea"/>
</dbReference>
<dbReference type="HOGENOM" id="CLU_192667_0_0_2"/>
<dbReference type="InParanoid" id="Q9Y8I1"/>
<dbReference type="PhylomeDB" id="Q9Y8I1"/>
<dbReference type="Proteomes" id="UP000000536">
    <property type="component" value="Chromosome"/>
</dbReference>
<dbReference type="GO" id="GO:0005694">
    <property type="term" value="C:chromosome"/>
    <property type="evidence" value="ECO:0007669"/>
    <property type="project" value="UniProtKB-SubCell"/>
</dbReference>
<dbReference type="GO" id="GO:0005737">
    <property type="term" value="C:cytoplasm"/>
    <property type="evidence" value="ECO:0007669"/>
    <property type="project" value="UniProtKB-SubCell"/>
</dbReference>
<dbReference type="GO" id="GO:0003677">
    <property type="term" value="F:DNA binding"/>
    <property type="evidence" value="ECO:0007669"/>
    <property type="project" value="UniProtKB-KW"/>
</dbReference>
<dbReference type="GO" id="GO:0046982">
    <property type="term" value="F:protein heterodimerization activity"/>
    <property type="evidence" value="ECO:0007669"/>
    <property type="project" value="InterPro"/>
</dbReference>
<dbReference type="GO" id="GO:0030261">
    <property type="term" value="P:chromosome condensation"/>
    <property type="evidence" value="ECO:0007669"/>
    <property type="project" value="UniProtKB-KW"/>
</dbReference>
<dbReference type="GO" id="GO:0030420">
    <property type="term" value="P:establishment of competence for transformation"/>
    <property type="evidence" value="ECO:0007669"/>
    <property type="project" value="UniProtKB-KW"/>
</dbReference>
<dbReference type="CDD" id="cd22909">
    <property type="entry name" value="HFD_archaea_histone-like"/>
    <property type="match status" value="1"/>
</dbReference>
<dbReference type="Gene3D" id="1.10.20.10">
    <property type="entry name" value="Histone, subunit A"/>
    <property type="match status" value="1"/>
</dbReference>
<dbReference type="InterPro" id="IPR050947">
    <property type="entry name" value="Archaeal_histone_HMF"/>
</dbReference>
<dbReference type="InterPro" id="IPR003958">
    <property type="entry name" value="CBFA_NFYB_domain"/>
</dbReference>
<dbReference type="InterPro" id="IPR009072">
    <property type="entry name" value="Histone-fold"/>
</dbReference>
<dbReference type="InterPro" id="IPR050004">
    <property type="entry name" value="HmfB-like"/>
</dbReference>
<dbReference type="NCBIfam" id="NF043032">
    <property type="entry name" value="archaea_histone"/>
    <property type="match status" value="1"/>
</dbReference>
<dbReference type="PANTHER" id="PTHR47828">
    <property type="entry name" value="ARCHAEAL HISTONE A"/>
    <property type="match status" value="1"/>
</dbReference>
<dbReference type="PANTHER" id="PTHR47828:SF1">
    <property type="entry name" value="ARCHAEAL HISTONE A"/>
    <property type="match status" value="1"/>
</dbReference>
<dbReference type="Pfam" id="PF00808">
    <property type="entry name" value="CBFD_NFYB_HMF"/>
    <property type="match status" value="1"/>
</dbReference>
<dbReference type="SUPFAM" id="SSF47113">
    <property type="entry name" value="Histone-fold"/>
    <property type="match status" value="1"/>
</dbReference>
<evidence type="ECO:0000250" key="1">
    <source>
        <dbReference type="UniProtKB" id="P19267"/>
    </source>
</evidence>
<evidence type="ECO:0000269" key="2">
    <source>
    </source>
</evidence>
<evidence type="ECO:0000269" key="3">
    <source>
    </source>
</evidence>
<evidence type="ECO:0000269" key="4">
    <source>
    </source>
</evidence>
<evidence type="ECO:0000269" key="5">
    <source>
    </source>
</evidence>
<evidence type="ECO:0000269" key="6">
    <source>
    </source>
</evidence>
<evidence type="ECO:0000303" key="7">
    <source>
    </source>
</evidence>
<evidence type="ECO:0000303" key="8">
    <source>
    </source>
</evidence>
<evidence type="ECO:0000303" key="9">
    <source>
    </source>
</evidence>
<evidence type="ECO:0000305" key="10"/>
<evidence type="ECO:0000305" key="11">
    <source>
    </source>
</evidence>
<evidence type="ECO:0000305" key="12">
    <source>
    </source>
</evidence>
<proteinExistence type="evidence at protein level"/>
<name>HARA_THEKO</name>
<keyword id="KW-0158">Chromosome</keyword>
<keyword id="KW-0178">Competence</keyword>
<keyword id="KW-0963">Cytoplasm</keyword>
<keyword id="KW-0226">DNA condensation</keyword>
<keyword id="KW-0238">DNA-binding</keyword>
<keyword id="KW-1185">Reference proteome</keyword>
<sequence>MAELPIAPVDRLIRKAGAERVSEDAAKVLAEYLEEYAIELSKKAVDFARHAGRKTVKAEDIKLAIKA</sequence>
<protein>
    <recommendedName>
        <fullName evidence="9">Archaeal histone HTkA</fullName>
    </recommendedName>
    <alternativeName>
        <fullName evidence="8">Archaeal histone A</fullName>
    </alternativeName>
    <alternativeName>
        <fullName>Archaeal histone A1</fullName>
    </alternativeName>
    <alternativeName>
        <fullName evidence="7">HpkA</fullName>
    </alternativeName>
</protein>
<comment type="function">
    <text evidence="2 3 4 5">Binds and compacts DNA (about 120 base pairs per nucleosome, corresponding to four histone dimers) to form nucleosome-like structures (PubMed:21148291, PubMed:28798133). HTkA/HpkA has lower DNA affinity than HTkB/HpkB and compacts DNA less well (PubMed:10329402). Required for transformation, participates in both transcription activation and repression in vivo (PubMed:23065975).</text>
</comment>
<comment type="subunit">
    <text evidence="12">Homodimer or heterodimer (PubMed:28798133). Dimers then assemble into higher oligomers, with the DNA wrapped around the protein core (PubMed:28798133). Higher order oligomerization of these structures can give rise to long, superhelical fibers in vitro (PubMed:28798133).</text>
</comment>
<comment type="subcellular location">
    <subcellularLocation>
        <location evidence="11">Cytoplasm</location>
    </subcellularLocation>
    <subcellularLocation>
        <location evidence="3">Chromosome</location>
    </subcellularLocation>
</comment>
<comment type="induction">
    <text evidence="2">After 17 hours growth at 85 degrees Celsius HTkB/HpkB is expressed about twice as abundantly as HTkA/HpkA (at protein level) (PubMed:10329402).</text>
</comment>
<comment type="disruption phenotype">
    <text evidence="4">Cells can no longer be transformed, grow like wild-type, some differences in transcription occur; double histone deletions (htkA and htkB) cannot be made (PubMed:23065975).</text>
</comment>
<comment type="miscellaneous">
    <text evidence="3 6">In a chromatin histone fraction 12% of the protein is this histone (PubMed:21148291). Cells have about 2.5 x 10(6) histone proteins per cell, enough to coat all DNA with a ratio of &gt;1 histone dimer for 30 bp of DNA, cells are polyploid with 7-19 genomes per cell (PubMed:30592095).</text>
</comment>
<comment type="similarity">
    <text evidence="10">Belongs to the archaeal histone HMF family.</text>
</comment>